<feature type="chain" id="PRO_0000075156" description="Alanine--tRNA ligase">
    <location>
        <begin position="1"/>
        <end position="900"/>
    </location>
</feature>
<feature type="binding site" evidence="1">
    <location>
        <position position="567"/>
    </location>
    <ligand>
        <name>Zn(2+)</name>
        <dbReference type="ChEBI" id="CHEBI:29105"/>
    </ligand>
</feature>
<feature type="binding site" evidence="1">
    <location>
        <position position="571"/>
    </location>
    <ligand>
        <name>Zn(2+)</name>
        <dbReference type="ChEBI" id="CHEBI:29105"/>
    </ligand>
</feature>
<feature type="binding site" evidence="1">
    <location>
        <position position="671"/>
    </location>
    <ligand>
        <name>Zn(2+)</name>
        <dbReference type="ChEBI" id="CHEBI:29105"/>
    </ligand>
</feature>
<feature type="binding site" evidence="1">
    <location>
        <position position="675"/>
    </location>
    <ligand>
        <name>Zn(2+)</name>
        <dbReference type="ChEBI" id="CHEBI:29105"/>
    </ligand>
</feature>
<keyword id="KW-0030">Aminoacyl-tRNA synthetase</keyword>
<keyword id="KW-0067">ATP-binding</keyword>
<keyword id="KW-0963">Cytoplasm</keyword>
<keyword id="KW-0436">Ligase</keyword>
<keyword id="KW-0479">Metal-binding</keyword>
<keyword id="KW-0547">Nucleotide-binding</keyword>
<keyword id="KW-0648">Protein biosynthesis</keyword>
<keyword id="KW-1185">Reference proteome</keyword>
<keyword id="KW-0694">RNA-binding</keyword>
<keyword id="KW-0820">tRNA-binding</keyword>
<keyword id="KW-0862">Zinc</keyword>
<name>SYA_MYCPN</name>
<evidence type="ECO:0000255" key="1">
    <source>
        <dbReference type="HAMAP-Rule" id="MF_00036"/>
    </source>
</evidence>
<protein>
    <recommendedName>
        <fullName evidence="1">Alanine--tRNA ligase</fullName>
        <ecNumber evidence="1">6.1.1.7</ecNumber>
    </recommendedName>
    <alternativeName>
        <fullName evidence="1">Alanyl-tRNA synthetase</fullName>
        <shortName evidence="1">AlaRS</shortName>
    </alternativeName>
</protein>
<dbReference type="EC" id="6.1.1.7" evidence="1"/>
<dbReference type="EMBL" id="U00089">
    <property type="protein sequence ID" value="AAB96070.1"/>
    <property type="molecule type" value="Genomic_DNA"/>
</dbReference>
<dbReference type="PIR" id="S73748">
    <property type="entry name" value="S73748"/>
</dbReference>
<dbReference type="RefSeq" id="NP_110107.1">
    <property type="nucleotide sequence ID" value="NC_000912.1"/>
</dbReference>
<dbReference type="RefSeq" id="WP_010874775.1">
    <property type="nucleotide sequence ID" value="NZ_OU342337.1"/>
</dbReference>
<dbReference type="SMR" id="P75368"/>
<dbReference type="IntAct" id="P75368">
    <property type="interactions" value="3"/>
</dbReference>
<dbReference type="STRING" id="272634.MPN_419"/>
<dbReference type="EnsemblBacteria" id="AAB96070">
    <property type="protein sequence ID" value="AAB96070"/>
    <property type="gene ID" value="MPN_419"/>
</dbReference>
<dbReference type="KEGG" id="mpn:MPN_419"/>
<dbReference type="PATRIC" id="fig|272634.6.peg.454"/>
<dbReference type="HOGENOM" id="CLU_004485_1_1_14"/>
<dbReference type="OrthoDB" id="9803884at2"/>
<dbReference type="BioCyc" id="MPNE272634:G1GJ3-678-MONOMER"/>
<dbReference type="Proteomes" id="UP000000808">
    <property type="component" value="Chromosome"/>
</dbReference>
<dbReference type="GO" id="GO:0005829">
    <property type="term" value="C:cytosol"/>
    <property type="evidence" value="ECO:0007669"/>
    <property type="project" value="TreeGrafter"/>
</dbReference>
<dbReference type="GO" id="GO:0004813">
    <property type="term" value="F:alanine-tRNA ligase activity"/>
    <property type="evidence" value="ECO:0007669"/>
    <property type="project" value="UniProtKB-UniRule"/>
</dbReference>
<dbReference type="GO" id="GO:0002161">
    <property type="term" value="F:aminoacyl-tRNA deacylase activity"/>
    <property type="evidence" value="ECO:0007669"/>
    <property type="project" value="TreeGrafter"/>
</dbReference>
<dbReference type="GO" id="GO:0005524">
    <property type="term" value="F:ATP binding"/>
    <property type="evidence" value="ECO:0007669"/>
    <property type="project" value="UniProtKB-UniRule"/>
</dbReference>
<dbReference type="GO" id="GO:0000049">
    <property type="term" value="F:tRNA binding"/>
    <property type="evidence" value="ECO:0007669"/>
    <property type="project" value="UniProtKB-KW"/>
</dbReference>
<dbReference type="GO" id="GO:0008270">
    <property type="term" value="F:zinc ion binding"/>
    <property type="evidence" value="ECO:0007669"/>
    <property type="project" value="UniProtKB-UniRule"/>
</dbReference>
<dbReference type="GO" id="GO:0006419">
    <property type="term" value="P:alanyl-tRNA aminoacylation"/>
    <property type="evidence" value="ECO:0007669"/>
    <property type="project" value="UniProtKB-UniRule"/>
</dbReference>
<dbReference type="CDD" id="cd00673">
    <property type="entry name" value="AlaRS_core"/>
    <property type="match status" value="1"/>
</dbReference>
<dbReference type="FunFam" id="3.30.930.10:FF:000046">
    <property type="entry name" value="Alanine--tRNA ligase"/>
    <property type="match status" value="1"/>
</dbReference>
<dbReference type="FunFam" id="2.40.30.130:FF:000042">
    <property type="entry name" value="Alanyl-tRNA synthetase family protein"/>
    <property type="match status" value="1"/>
</dbReference>
<dbReference type="Gene3D" id="2.40.30.130">
    <property type="match status" value="1"/>
</dbReference>
<dbReference type="Gene3D" id="3.30.930.10">
    <property type="entry name" value="Bira Bifunctional Protein, Domain 2"/>
    <property type="match status" value="1"/>
</dbReference>
<dbReference type="Gene3D" id="3.30.980.10">
    <property type="entry name" value="Threonyl-trna Synthetase, Chain A, domain 2"/>
    <property type="match status" value="1"/>
</dbReference>
<dbReference type="HAMAP" id="MF_00036_B">
    <property type="entry name" value="Ala_tRNA_synth_B"/>
    <property type="match status" value="1"/>
</dbReference>
<dbReference type="InterPro" id="IPR045864">
    <property type="entry name" value="aa-tRNA-synth_II/BPL/LPL"/>
</dbReference>
<dbReference type="InterPro" id="IPR002318">
    <property type="entry name" value="Ala-tRNA-lgiase_IIc"/>
</dbReference>
<dbReference type="InterPro" id="IPR018162">
    <property type="entry name" value="Ala-tRNA-ligase_IIc_anticod-bd"/>
</dbReference>
<dbReference type="InterPro" id="IPR018165">
    <property type="entry name" value="Ala-tRNA-synth_IIc_core"/>
</dbReference>
<dbReference type="InterPro" id="IPR018164">
    <property type="entry name" value="Ala-tRNA-synth_IIc_N"/>
</dbReference>
<dbReference type="InterPro" id="IPR050058">
    <property type="entry name" value="Ala-tRNA_ligase"/>
</dbReference>
<dbReference type="InterPro" id="IPR023033">
    <property type="entry name" value="Ala_tRNA_ligase_euk/bac"/>
</dbReference>
<dbReference type="InterPro" id="IPR018163">
    <property type="entry name" value="Thr/Ala-tRNA-synth_IIc_edit"/>
</dbReference>
<dbReference type="InterPro" id="IPR009000">
    <property type="entry name" value="Transl_B-barrel_sf"/>
</dbReference>
<dbReference type="InterPro" id="IPR012947">
    <property type="entry name" value="tRNA_SAD"/>
</dbReference>
<dbReference type="NCBIfam" id="TIGR00344">
    <property type="entry name" value="alaS"/>
    <property type="match status" value="1"/>
</dbReference>
<dbReference type="PANTHER" id="PTHR11777:SF9">
    <property type="entry name" value="ALANINE--TRNA LIGASE, CYTOPLASMIC"/>
    <property type="match status" value="1"/>
</dbReference>
<dbReference type="PANTHER" id="PTHR11777">
    <property type="entry name" value="ALANYL-TRNA SYNTHETASE"/>
    <property type="match status" value="1"/>
</dbReference>
<dbReference type="Pfam" id="PF01411">
    <property type="entry name" value="tRNA-synt_2c"/>
    <property type="match status" value="1"/>
</dbReference>
<dbReference type="Pfam" id="PF07973">
    <property type="entry name" value="tRNA_SAD"/>
    <property type="match status" value="1"/>
</dbReference>
<dbReference type="PRINTS" id="PR00980">
    <property type="entry name" value="TRNASYNTHALA"/>
</dbReference>
<dbReference type="SMART" id="SM00863">
    <property type="entry name" value="tRNA_SAD"/>
    <property type="match status" value="1"/>
</dbReference>
<dbReference type="SUPFAM" id="SSF55681">
    <property type="entry name" value="Class II aaRS and biotin synthetases"/>
    <property type="match status" value="1"/>
</dbReference>
<dbReference type="SUPFAM" id="SSF101353">
    <property type="entry name" value="Putative anticodon-binding domain of alanyl-tRNA synthetase (AlaRS)"/>
    <property type="match status" value="1"/>
</dbReference>
<dbReference type="SUPFAM" id="SSF55186">
    <property type="entry name" value="ThrRS/AlaRS common domain"/>
    <property type="match status" value="1"/>
</dbReference>
<dbReference type="SUPFAM" id="SSF50447">
    <property type="entry name" value="Translation proteins"/>
    <property type="match status" value="1"/>
</dbReference>
<dbReference type="PROSITE" id="PS50860">
    <property type="entry name" value="AA_TRNA_LIGASE_II_ALA"/>
    <property type="match status" value="1"/>
</dbReference>
<reference key="1">
    <citation type="journal article" date="1996" name="Nucleic Acids Res.">
        <title>Complete sequence analysis of the genome of the bacterium Mycoplasma pneumoniae.</title>
        <authorList>
            <person name="Himmelreich R."/>
            <person name="Hilbert H."/>
            <person name="Plagens H."/>
            <person name="Pirkl E."/>
            <person name="Li B.-C."/>
            <person name="Herrmann R."/>
        </authorList>
    </citation>
    <scope>NUCLEOTIDE SEQUENCE [LARGE SCALE GENOMIC DNA]</scope>
    <source>
        <strain>ATCC 29342 / M129 / Subtype 1</strain>
    </source>
</reference>
<proteinExistence type="inferred from homology"/>
<accession>P75368</accession>
<gene>
    <name evidence="1" type="primary">alaS</name>
    <name type="ordered locus">MPN_419</name>
    <name type="ORF">MP422</name>
</gene>
<comment type="function">
    <text evidence="1">Catalyzes the attachment of alanine to tRNA(Ala) in a two-step reaction: alanine is first activated by ATP to form Ala-AMP and then transferred to the acceptor end of tRNA(Ala). Also edits incorrectly charged Ser-tRNA(Ala) and Gly-tRNA(Ala) via its editing domain.</text>
</comment>
<comment type="catalytic activity">
    <reaction evidence="1">
        <text>tRNA(Ala) + L-alanine + ATP = L-alanyl-tRNA(Ala) + AMP + diphosphate</text>
        <dbReference type="Rhea" id="RHEA:12540"/>
        <dbReference type="Rhea" id="RHEA-COMP:9657"/>
        <dbReference type="Rhea" id="RHEA-COMP:9923"/>
        <dbReference type="ChEBI" id="CHEBI:30616"/>
        <dbReference type="ChEBI" id="CHEBI:33019"/>
        <dbReference type="ChEBI" id="CHEBI:57972"/>
        <dbReference type="ChEBI" id="CHEBI:78442"/>
        <dbReference type="ChEBI" id="CHEBI:78497"/>
        <dbReference type="ChEBI" id="CHEBI:456215"/>
        <dbReference type="EC" id="6.1.1.7"/>
    </reaction>
</comment>
<comment type="cofactor">
    <cofactor evidence="1">
        <name>Zn(2+)</name>
        <dbReference type="ChEBI" id="CHEBI:29105"/>
    </cofactor>
    <text evidence="1">Binds 1 zinc ion per subunit.</text>
</comment>
<comment type="subcellular location">
    <subcellularLocation>
        <location evidence="1">Cytoplasm</location>
    </subcellularLocation>
</comment>
<comment type="domain">
    <text evidence="1">Consists of three domains; the N-terminal catalytic domain, the editing domain and the C-terminal C-Ala domain. The editing domain removes incorrectly charged amino acids, while the C-Ala domain, along with tRNA(Ala), serves as a bridge to cooperatively bring together the editing and aminoacylation centers thus stimulating deacylation of misacylated tRNAs.</text>
</comment>
<comment type="similarity">
    <text evidence="1">Belongs to the class-II aminoacyl-tRNA synthetase family.</text>
</comment>
<sequence>MKWTTDKVRQTWLDYFTAKGHLALPSKSLIPVNDPSLLWINSGVATLKDYFSAKKTPPSKRLANAQICLRVNDIENVGFTSRHQTLFEMLGNFSIGDYFKEEAIGFANDLLVNHYHLDPKRFYITVYQDDELTFNTWLKHGIPASRIIKCDRDRNFWDLGLGPCGPCTEIYYDRGERFDPHKVGEKLFFEDIENDRYVEVWNIVFSQFNNDGNGNYSELAQKNIDTGAGIERLVAILQDAPTNFDTDIFLKLIGIIEQHCKHKYDTNLYFKFDQKLNEAQSAFRIISDHFKAITFTIAEGVLPGPNERSYIVRRLLRRALLACKKLDLDLKFIDPMVDAIISVYGSYYQQLQGKNQVVQQAIWKEVTAFDKTINLGLMLFEKSIAHNALQPQVAFQLYETYGFPIEMIKELVDKRQLQVDWKAVEQLMEQHRLISKQNSNTLSFEKQNEHLVNFKTASEFLYEANEITAKVIGLFDEQYQPVQKLHNQSGYVVFDQTVLYATSGGQRYDEGYCINHSQNDQRVSFQGVFKGPNKQHFHFFLTGSFQLGDKVILVHDGKWRQLVKNNHSLEHLLHAALQNEIDPLIKQDGAFKSAQKATIDFNFSRALTWAELERVEHRIRQIIQQDIQREEIFTDLEGSQKLNAIAYFEEEYSNHELLRVIRFGDFSVELCGGTHVEHTGLIENCFITDYYARGTGRWRIEIISSNETIAAYLNEQNGKLSETINSLHNTLNNIANPALNKQKTALTKQLNHFHLPQVITDLRKCQALLNELKITVNELKTEDFKWKQKQLAEKIKQELLELAKQDKAYVLASFAAVDPKLLSQVAQAVLNQHKNKLFVLLNQFNNSPSFMLLGQDVSKCIQLLKAHFELKGGGSNNFFRGSFNESVDVSKLQAILDTLQ</sequence>
<organism>
    <name type="scientific">Mycoplasma pneumoniae (strain ATCC 29342 / M129 / Subtype 1)</name>
    <name type="common">Mycoplasmoides pneumoniae</name>
    <dbReference type="NCBI Taxonomy" id="272634"/>
    <lineage>
        <taxon>Bacteria</taxon>
        <taxon>Bacillati</taxon>
        <taxon>Mycoplasmatota</taxon>
        <taxon>Mycoplasmoidales</taxon>
        <taxon>Mycoplasmoidaceae</taxon>
        <taxon>Mycoplasmoides</taxon>
    </lineage>
</organism>